<name>INX19_CAEEL</name>
<dbReference type="EMBL" id="FO081208">
    <property type="protein sequence ID" value="CCD69899.1"/>
    <property type="molecule type" value="Genomic_DNA"/>
</dbReference>
<dbReference type="EMBL" id="FO081208">
    <property type="protein sequence ID" value="CCD69900.1"/>
    <property type="molecule type" value="Genomic_DNA"/>
</dbReference>
<dbReference type="RefSeq" id="NP_001367775.1">
    <molecule id="O61715-2"/>
    <property type="nucleotide sequence ID" value="NM_001381412.2"/>
</dbReference>
<dbReference type="RefSeq" id="NP_490983.2">
    <molecule id="O61715-1"/>
    <property type="nucleotide sequence ID" value="NM_058582.5"/>
</dbReference>
<dbReference type="RefSeq" id="NP_871864.1">
    <property type="nucleotide sequence ID" value="NM_182064.3"/>
</dbReference>
<dbReference type="SMR" id="O61715"/>
<dbReference type="FunCoup" id="O61715">
    <property type="interactions" value="182"/>
</dbReference>
<dbReference type="STRING" id="6239.T16H5.1a.1"/>
<dbReference type="TCDB" id="1.A.25.1.5">
    <property type="family name" value="the gap junction-forming innexin (innexin) family"/>
</dbReference>
<dbReference type="PaxDb" id="6239-T16H5.1a"/>
<dbReference type="EnsemblMetazoa" id="T16H5.1a.1">
    <molecule id="O61715-1"/>
    <property type="protein sequence ID" value="T16H5.1a.1"/>
    <property type="gene ID" value="WBGene00002141"/>
</dbReference>
<dbReference type="EnsemblMetazoa" id="T16H5.1a.2">
    <molecule id="O61715-1"/>
    <property type="protein sequence ID" value="T16H5.1a.2"/>
    <property type="gene ID" value="WBGene00002141"/>
</dbReference>
<dbReference type="EnsemblMetazoa" id="T16H5.1b.1">
    <molecule id="O61715-2"/>
    <property type="protein sequence ID" value="T16H5.1b.1"/>
    <property type="gene ID" value="WBGene00002141"/>
</dbReference>
<dbReference type="GeneID" id="171805"/>
<dbReference type="KEGG" id="cel:CELE_T16H5.1"/>
<dbReference type="UCSC" id="T16H5.1a">
    <molecule id="O61715-1"/>
    <property type="organism name" value="c. elegans"/>
</dbReference>
<dbReference type="AGR" id="WB:WBGene00002141"/>
<dbReference type="CTD" id="171805"/>
<dbReference type="WormBase" id="T16H5.1a">
    <molecule id="O61715-1"/>
    <property type="protein sequence ID" value="CE30834"/>
    <property type="gene ID" value="WBGene00002141"/>
    <property type="gene designation" value="inx-19"/>
</dbReference>
<dbReference type="WormBase" id="T16H5.1b">
    <molecule id="O61715-2"/>
    <property type="protein sequence ID" value="CE33183"/>
    <property type="gene ID" value="WBGene00002141"/>
    <property type="gene designation" value="inx-19"/>
</dbReference>
<dbReference type="eggNOG" id="ENOG502SSX3">
    <property type="taxonomic scope" value="Eukaryota"/>
</dbReference>
<dbReference type="InParanoid" id="O61715"/>
<dbReference type="OMA" id="WQSGLNI"/>
<dbReference type="OrthoDB" id="5867527at2759"/>
<dbReference type="PhylomeDB" id="O61715"/>
<dbReference type="PRO" id="PR:O61715"/>
<dbReference type="Proteomes" id="UP000001940">
    <property type="component" value="Chromosome I"/>
</dbReference>
<dbReference type="Bgee" id="WBGene00002141">
    <property type="expression patterns" value="Expressed in pharyngeal muscle cell (C elegans) and 3 other cell types or tissues"/>
</dbReference>
<dbReference type="GO" id="GO:0005921">
    <property type="term" value="C:gap junction"/>
    <property type="evidence" value="ECO:0000314"/>
    <property type="project" value="UniProtKB"/>
</dbReference>
<dbReference type="GO" id="GO:0032809">
    <property type="term" value="C:neuronal cell body membrane"/>
    <property type="evidence" value="ECO:0000314"/>
    <property type="project" value="WormBase"/>
</dbReference>
<dbReference type="GO" id="GO:0005886">
    <property type="term" value="C:plasma membrane"/>
    <property type="evidence" value="ECO:0000314"/>
    <property type="project" value="UniProtKB"/>
</dbReference>
<dbReference type="GO" id="GO:0019855">
    <property type="term" value="F:calcium channel inhibitor activity"/>
    <property type="evidence" value="ECO:0000316"/>
    <property type="project" value="WormBase"/>
</dbReference>
<dbReference type="GO" id="GO:0005243">
    <property type="term" value="F:gap junction channel activity"/>
    <property type="evidence" value="ECO:0000314"/>
    <property type="project" value="UniProtKB"/>
</dbReference>
<dbReference type="GO" id="GO:0055077">
    <property type="term" value="F:gap junction hemi-channel activity"/>
    <property type="evidence" value="ECO:0000314"/>
    <property type="project" value="UniProtKB"/>
</dbReference>
<dbReference type="GO" id="GO:0004860">
    <property type="term" value="F:protein kinase inhibitor activity"/>
    <property type="evidence" value="ECO:0000316"/>
    <property type="project" value="WormBase"/>
</dbReference>
<dbReference type="GO" id="GO:0030154">
    <property type="term" value="P:cell differentiation"/>
    <property type="evidence" value="ECO:0007669"/>
    <property type="project" value="UniProtKB-KW"/>
</dbReference>
<dbReference type="GO" id="GO:0035545">
    <property type="term" value="P:determination of left/right asymmetry in nervous system"/>
    <property type="evidence" value="ECO:0000315"/>
    <property type="project" value="WormBase"/>
</dbReference>
<dbReference type="GO" id="GO:0010496">
    <property type="term" value="P:intercellular transport"/>
    <property type="evidence" value="ECO:0000314"/>
    <property type="project" value="WormBase"/>
</dbReference>
<dbReference type="GO" id="GO:0034220">
    <property type="term" value="P:monoatomic ion transmembrane transport"/>
    <property type="evidence" value="ECO:0007669"/>
    <property type="project" value="UniProtKB-KW"/>
</dbReference>
<dbReference type="InterPro" id="IPR000990">
    <property type="entry name" value="Innexin"/>
</dbReference>
<dbReference type="PANTHER" id="PTHR11893">
    <property type="entry name" value="INNEXIN"/>
    <property type="match status" value="1"/>
</dbReference>
<dbReference type="PANTHER" id="PTHR11893:SF24">
    <property type="entry name" value="INNEXIN-19"/>
    <property type="match status" value="1"/>
</dbReference>
<dbReference type="Pfam" id="PF00876">
    <property type="entry name" value="Innexin"/>
    <property type="match status" value="1"/>
</dbReference>
<dbReference type="PRINTS" id="PR01262">
    <property type="entry name" value="INNEXIN"/>
</dbReference>
<dbReference type="PROSITE" id="PS51013">
    <property type="entry name" value="PANNEXIN"/>
    <property type="match status" value="1"/>
</dbReference>
<sequence>MWRTPASTGPLRQDRQMFFHATLARSFINALSVRGDDDAVDRLNYYYTPLILAVCCLVISAKQYGGTPIECWVNPHSRESMEEYIESYCWIQNTYWIPMYENVPDDHTAREEKQIGYYQWVPFILIAEALMFSLPCIFWRLCSFQSGLNIQTLINAACDGQALLDASDRQKAVEAITTNFVDNLDLQSPNGRIRARGWIARIKFSRFLSGQCLSILHSFTKLLYSMNVVAQFLILNACLKSSDFLFFGFQVLNDIWAGRPWTETGHFPRVTLCDFEVRYLANLNRYTVQCALLINIINEKVFAFLWCWYMILAIITTCSFIYWIANSFIHSEKVDYVMKFIQIAESSEFKKLQKFEKDATVERLYTVIAFAPHLLDTFVSDFLKSDGVLMLRMISNHAGDMIVVQLVRNLWQEFRERNWREFEEHEEMKDVEMRRIHGGERIVISNPGQTKSFL</sequence>
<proteinExistence type="evidence at protein level"/>
<keyword id="KW-0025">Alternative splicing</keyword>
<keyword id="KW-0965">Cell junction</keyword>
<keyword id="KW-1003">Cell membrane</keyword>
<keyword id="KW-0217">Developmental protein</keyword>
<keyword id="KW-0221">Differentiation</keyword>
<keyword id="KW-0303">Gap junction</keyword>
<keyword id="KW-0407">Ion channel</keyword>
<keyword id="KW-0406">Ion transport</keyword>
<keyword id="KW-0472">Membrane</keyword>
<keyword id="KW-0524">Neurogenesis</keyword>
<keyword id="KW-1185">Reference proteome</keyword>
<keyword id="KW-0812">Transmembrane</keyword>
<keyword id="KW-1133">Transmembrane helix</keyword>
<keyword id="KW-0813">Transport</keyword>
<accession>O61715</accession>
<accession>Q86S34</accession>
<organism>
    <name type="scientific">Caenorhabditis elegans</name>
    <dbReference type="NCBI Taxonomy" id="6239"/>
    <lineage>
        <taxon>Eukaryota</taxon>
        <taxon>Metazoa</taxon>
        <taxon>Ecdysozoa</taxon>
        <taxon>Nematoda</taxon>
        <taxon>Chromadorea</taxon>
        <taxon>Rhabditida</taxon>
        <taxon>Rhabditina</taxon>
        <taxon>Rhabditomorpha</taxon>
        <taxon>Rhabditoidea</taxon>
        <taxon>Rhabditidae</taxon>
        <taxon>Peloderinae</taxon>
        <taxon>Caenorhabditis</taxon>
    </lineage>
</organism>
<reference key="1">
    <citation type="journal article" date="1998" name="Science">
        <title>Genome sequence of the nematode C. elegans: a platform for investigating biology.</title>
        <authorList>
            <consortium name="The C. elegans sequencing consortium"/>
        </authorList>
    </citation>
    <scope>NUCLEOTIDE SEQUENCE [LARGE SCALE GENOMIC DNA]</scope>
    <scope>ALTERNATIVE SPLICING</scope>
    <source>
        <strain>Bristol N2</strain>
    </source>
</reference>
<reference key="2">
    <citation type="journal article" date="1997" name="J. Neurochem.">
        <title>The C. elegans avermectin resistance and anesthetic response gene unc-9 encodes a member of a protein family implicated in electrical coupling of excitable cells.</title>
        <authorList>
            <person name="Barnes T.M."/>
            <person name="Hekimi S."/>
        </authorList>
    </citation>
    <scope>NOMENCLATURE</scope>
</reference>
<reference key="3">
    <citation type="journal article" date="2007" name="Cell">
        <title>An innexin-dependent cell network establishes left-right neuronal asymmetry in C. elegans.</title>
        <authorList>
            <person name="Chuang C.-F."/>
            <person name="Vanhoven M.K."/>
            <person name="Fetter R.D."/>
            <person name="Verselis V.K."/>
            <person name="Bargmann C.I."/>
        </authorList>
    </citation>
    <scope>FUNCTION</scope>
    <scope>SUBCELLULAR LOCATION</scope>
    <scope>TISSUE SPECIFICITY</scope>
    <scope>DEVELOPMENTAL STAGE</scope>
    <scope>MUTAGENESIS OF GLU-70</scope>
</reference>
<protein>
    <recommendedName>
        <fullName>Innexin-19</fullName>
    </recommendedName>
    <alternativeName>
        <fullName>Neuronal symmetry protein 5</fullName>
    </alternativeName>
    <alternativeName>
        <fullName>Protein opu-19</fullName>
    </alternativeName>
</protein>
<comment type="function">
    <text evidence="3">Structural component of the gap junctions that specifically coordinates left-right asymmetry in the developing nervous system. Acts by forming gap junction network linking embryonic neurons and providing electrical coupling between cells, leading to promote or inhibit AWC signaling. Required for the left and right AWC olfactory neurons to establish asymmetric patterns of gene expression during embryogenesis. Acts autonomously.</text>
</comment>
<comment type="subcellular location">
    <subcellularLocation>
        <location evidence="3">Cell membrane</location>
        <topology evidence="2 3">Multi-pass membrane protein</topology>
    </subcellularLocation>
    <subcellularLocation>
        <location evidence="3">Cell junction</location>
        <location evidence="3">Gap junction</location>
    </subcellularLocation>
    <text>Specifically present at the transient gap junctions formed between the cell bodies of embryonic neurons. Excluded from axons and dendrites.</text>
</comment>
<comment type="alternative products">
    <event type="alternative splicing"/>
    <isoform>
        <id>O61715-1</id>
        <name>a</name>
        <sequence type="displayed"/>
    </isoform>
    <isoform>
        <id>O61715-2</id>
        <name>b</name>
        <sequence type="described" ref="VSP_034267"/>
    </isoform>
</comment>
<comment type="tissue specificity">
    <text evidence="3">Specifically expressed in sensory neurons and interneurons in the head and tail. Expressed in neurons AWC, ASH, AFD, ASI, ADL, ASK, BAG, AWB, and ADF (head sensory neurons); ADA, AIZ, RIC, AIY, and AIM (head interneurons); PHA and PHB (tail sensory neurons); and PVC and PVQ (tail interneurons).</text>
</comment>
<comment type="developmental stage">
    <text evidence="3">Expression begins about halfway through embryogenesis. Expressed at higher level in late embryos and in L1 larvae, and fades thereafter. In adults, a weak expression is maintained in several neurons, including ASH but not AWC.</text>
</comment>
<comment type="similarity">
    <text evidence="2">Belongs to the pannexin family.</text>
</comment>
<feature type="chain" id="PRO_0000341372" description="Innexin-19">
    <location>
        <begin position="1"/>
        <end position="454"/>
    </location>
</feature>
<feature type="topological domain" description="Cytoplasmic" evidence="1">
    <location>
        <begin position="1"/>
        <end position="48"/>
    </location>
</feature>
<feature type="transmembrane region" description="Helical" evidence="2">
    <location>
        <begin position="49"/>
        <end position="69"/>
    </location>
</feature>
<feature type="topological domain" description="Extracellular" evidence="1">
    <location>
        <begin position="70"/>
        <end position="118"/>
    </location>
</feature>
<feature type="transmembrane region" description="Helical" evidence="2">
    <location>
        <begin position="119"/>
        <end position="139"/>
    </location>
</feature>
<feature type="topological domain" description="Cytoplasmic" evidence="1">
    <location>
        <begin position="140"/>
        <end position="214"/>
    </location>
</feature>
<feature type="transmembrane region" description="Helical" evidence="2">
    <location>
        <begin position="215"/>
        <end position="235"/>
    </location>
</feature>
<feature type="topological domain" description="Extracellular" evidence="1">
    <location>
        <begin position="236"/>
        <end position="300"/>
    </location>
</feature>
<feature type="transmembrane region" description="Helical" evidence="2">
    <location>
        <begin position="301"/>
        <end position="321"/>
    </location>
</feature>
<feature type="topological domain" description="Cytoplasmic" evidence="1">
    <location>
        <begin position="322"/>
        <end position="454"/>
    </location>
</feature>
<feature type="splice variant" id="VSP_034267" description="In isoform b." evidence="4">
    <location>
        <begin position="1"/>
        <end position="16"/>
    </location>
</feature>
<feature type="mutagenesis site" description="In ky634; absence of chemotaxis to the odorant 2-butanone, which is sensed by AWC(ON), but normal response to the odorant 2,3-pentanedione, which is sensed by AWC(OFF), suggesting the absence of functional AWC(ON) neurons." evidence="3">
    <original>E</original>
    <variation>K</variation>
    <location>
        <position position="70"/>
    </location>
</feature>
<evidence type="ECO:0000255" key="1"/>
<evidence type="ECO:0000255" key="2">
    <source>
        <dbReference type="PROSITE-ProRule" id="PRU00351"/>
    </source>
</evidence>
<evidence type="ECO:0000269" key="3">
    <source>
    </source>
</evidence>
<evidence type="ECO:0000305" key="4"/>
<gene>
    <name type="primary">inx-19</name>
    <name type="synonym">nsy-5</name>
    <name type="synonym">opu-19</name>
    <name type="ORF">T16H5.1</name>
</gene>